<accession>B3SRS6</accession>
<feature type="chain" id="PRO_0000369522" description="Non-structural protein 6">
    <location>
        <begin position="1"/>
        <end position="37"/>
    </location>
</feature>
<protein>
    <recommendedName>
        <fullName evidence="1">Non-structural protein 6</fullName>
        <shortName evidence="1">NSP6</shortName>
    </recommendedName>
</protein>
<comment type="subunit">
    <text evidence="1">Interacts with NSP2 and NSP5.</text>
</comment>
<comment type="subcellular location">
    <subcellularLocation>
        <location evidence="1">Host cytoplasm</location>
    </subcellularLocation>
    <subcellularLocation>
        <location evidence="1">Host mitochondrion</location>
    </subcellularLocation>
    <text evidence="1">Found in spherical cytoplasmic structures, called viral factories, that appear early after infection and are the site of viral replication and packaging.</text>
</comment>
<comment type="similarity">
    <text evidence="1">Belongs to the rotavirus A NSP6 family.</text>
</comment>
<comment type="caution">
    <text>This protein is truncated.</text>
</comment>
<organism>
    <name type="scientific">Rotavirus A (strain RVA/Human/United States/D/1974/G1P1A[8])</name>
    <name type="common">RV-A</name>
    <dbReference type="NCBI Taxonomy" id="578831"/>
    <lineage>
        <taxon>Viruses</taxon>
        <taxon>Riboviria</taxon>
        <taxon>Orthornavirae</taxon>
        <taxon>Duplornaviricota</taxon>
        <taxon>Resentoviricetes</taxon>
        <taxon>Reovirales</taxon>
        <taxon>Sedoreoviridae</taxon>
        <taxon>Rotavirus</taxon>
        <taxon>Rotavirus A</taxon>
    </lineage>
</organism>
<organismHost>
    <name type="scientific">Homo sapiens</name>
    <name type="common">Human</name>
    <dbReference type="NCBI Taxonomy" id="9606"/>
</organismHost>
<evidence type="ECO:0000255" key="1">
    <source>
        <dbReference type="HAMAP-Rule" id="MF_04093"/>
    </source>
</evidence>
<reference key="1">
    <citation type="journal article" date="2008" name="J. Virol.">
        <title>Group A human rotavirus genomics: evidence that gene constellations are influenced by viral protein interactions.</title>
        <authorList>
            <person name="Heiman E.M."/>
            <person name="McDonald S.M."/>
            <person name="Barro M."/>
            <person name="Taraporewala Z.F."/>
            <person name="Bar-Magen T."/>
            <person name="Patton J.T."/>
        </authorList>
    </citation>
    <scope>NUCLEOTIDE SEQUENCE [GENOMIC RNA]</scope>
</reference>
<dbReference type="EMBL" id="EF672576">
    <property type="protein sequence ID" value="ABV53251.1"/>
    <property type="molecule type" value="Genomic_RNA"/>
</dbReference>
<dbReference type="Proteomes" id="UP000006368">
    <property type="component" value="Genome"/>
</dbReference>
<dbReference type="GO" id="GO:0033650">
    <property type="term" value="C:host cell mitochondrion"/>
    <property type="evidence" value="ECO:0007669"/>
    <property type="project" value="UniProtKB-SubCell"/>
</dbReference>
<dbReference type="HAMAP" id="MF_04093">
    <property type="entry name" value="ROTA_NSP6"/>
    <property type="match status" value="1"/>
</dbReference>
<dbReference type="InterPro" id="IPR006950">
    <property type="entry name" value="Rotavirus_NSP6"/>
</dbReference>
<dbReference type="Pfam" id="PF04866">
    <property type="entry name" value="Rota_NS6"/>
    <property type="match status" value="1"/>
</dbReference>
<proteinExistence type="inferred from homology"/>
<name>NSP6_ROTAD</name>
<sequence>MNRLLQRQLFLENLLVGTNSMFHQISKHSINTCCRSL</sequence>
<keyword id="KW-1035">Host cytoplasm</keyword>
<keyword id="KW-1045">Host mitochondrion</keyword>
<keyword id="KW-1185">Reference proteome</keyword>